<gene>
    <name type="primary">PRAF2</name>
    <name type="ORF">JM4</name>
</gene>
<protein>
    <recommendedName>
        <fullName>PRA1 family protein 2</fullName>
    </recommendedName>
</protein>
<dbReference type="EMBL" id="AJ005896">
    <property type="protein sequence ID" value="CAA06753.1"/>
    <property type="molecule type" value="mRNA"/>
</dbReference>
<dbReference type="EMBL" id="CR457023">
    <property type="protein sequence ID" value="CAG33304.1"/>
    <property type="molecule type" value="mRNA"/>
</dbReference>
<dbReference type="EMBL" id="AK315374">
    <property type="protein sequence ID" value="BAG37767.1"/>
    <property type="molecule type" value="mRNA"/>
</dbReference>
<dbReference type="EMBL" id="CH471224">
    <property type="protein sequence ID" value="EAW50706.1"/>
    <property type="molecule type" value="Genomic_DNA"/>
</dbReference>
<dbReference type="EMBL" id="BC021213">
    <property type="protein sequence ID" value="AAH21213.1"/>
    <property type="molecule type" value="mRNA"/>
</dbReference>
<dbReference type="CCDS" id="CCDS14317.1"/>
<dbReference type="RefSeq" id="NP_009144.1">
    <property type="nucleotide sequence ID" value="NM_007213.3"/>
</dbReference>
<dbReference type="BioGRID" id="116396">
    <property type="interactions" value="115"/>
</dbReference>
<dbReference type="FunCoup" id="O60831">
    <property type="interactions" value="185"/>
</dbReference>
<dbReference type="IntAct" id="O60831">
    <property type="interactions" value="81"/>
</dbReference>
<dbReference type="MINT" id="O60831"/>
<dbReference type="STRING" id="9606.ENSP00000451962"/>
<dbReference type="GlyGen" id="O60831">
    <property type="glycosylation" value="1 site, 1 O-linked glycan (1 site)"/>
</dbReference>
<dbReference type="iPTMnet" id="O60831"/>
<dbReference type="PhosphoSitePlus" id="O60831"/>
<dbReference type="SwissPalm" id="O60831"/>
<dbReference type="BioMuta" id="PRAF2"/>
<dbReference type="jPOST" id="O60831"/>
<dbReference type="MassIVE" id="O60831"/>
<dbReference type="PaxDb" id="9606-ENSP00000451962"/>
<dbReference type="PeptideAtlas" id="O60831"/>
<dbReference type="ProteomicsDB" id="49623"/>
<dbReference type="Pumba" id="O60831"/>
<dbReference type="Antibodypedia" id="34944">
    <property type="antibodies" value="146 antibodies from 29 providers"/>
</dbReference>
<dbReference type="DNASU" id="11230"/>
<dbReference type="Ensembl" id="ENST00000553851.3">
    <property type="protein sequence ID" value="ENSP00000451962.2"/>
    <property type="gene ID" value="ENSG00000243279.4"/>
</dbReference>
<dbReference type="Ensembl" id="ENST00000710261.1">
    <property type="protein sequence ID" value="ENSP00000518158.1"/>
    <property type="gene ID" value="ENSG00000292222.1"/>
</dbReference>
<dbReference type="GeneID" id="11230"/>
<dbReference type="KEGG" id="hsa:11230"/>
<dbReference type="MANE-Select" id="ENST00000553851.3">
    <property type="protein sequence ID" value="ENSP00000451962.2"/>
    <property type="RefSeq nucleotide sequence ID" value="NM_007213.3"/>
    <property type="RefSeq protein sequence ID" value="NP_009144.1"/>
</dbReference>
<dbReference type="UCSC" id="uc033ecu.2">
    <property type="organism name" value="human"/>
</dbReference>
<dbReference type="AGR" id="HGNC:28911"/>
<dbReference type="CTD" id="11230"/>
<dbReference type="DisGeNET" id="11230"/>
<dbReference type="GeneCards" id="PRAF2"/>
<dbReference type="HGNC" id="HGNC:28911">
    <property type="gene designation" value="PRAF2"/>
</dbReference>
<dbReference type="HPA" id="ENSG00000243279">
    <property type="expression patterns" value="Tissue enhanced (epididymis)"/>
</dbReference>
<dbReference type="MIM" id="300840">
    <property type="type" value="gene"/>
</dbReference>
<dbReference type="neXtProt" id="NX_O60831"/>
<dbReference type="OpenTargets" id="ENSG00000243279"/>
<dbReference type="PharmGKB" id="PA134955002"/>
<dbReference type="VEuPathDB" id="HostDB:ENSG00000243279"/>
<dbReference type="eggNOG" id="KOG4050">
    <property type="taxonomic scope" value="Eukaryota"/>
</dbReference>
<dbReference type="GeneTree" id="ENSGT00390000008631"/>
<dbReference type="HOGENOM" id="CLU_097683_0_0_1"/>
<dbReference type="InParanoid" id="O60831"/>
<dbReference type="OMA" id="GDPQRWC"/>
<dbReference type="OrthoDB" id="18213at2759"/>
<dbReference type="PAN-GO" id="O60831">
    <property type="GO annotations" value="1 GO annotation based on evolutionary models"/>
</dbReference>
<dbReference type="PhylomeDB" id="O60831"/>
<dbReference type="TreeFam" id="TF105479"/>
<dbReference type="PathwayCommons" id="O60831"/>
<dbReference type="SignaLink" id="O60831"/>
<dbReference type="BioGRID-ORCS" id="11230">
    <property type="hits" value="6 hits in 774 CRISPR screens"/>
</dbReference>
<dbReference type="ChiTaRS" id="PRAF2">
    <property type="organism name" value="human"/>
</dbReference>
<dbReference type="GenomeRNAi" id="11230"/>
<dbReference type="Pharos" id="O60831">
    <property type="development level" value="Tbio"/>
</dbReference>
<dbReference type="PRO" id="PR:O60831"/>
<dbReference type="Proteomes" id="UP000005640">
    <property type="component" value="Chromosome X"/>
</dbReference>
<dbReference type="RNAct" id="O60831">
    <property type="molecule type" value="protein"/>
</dbReference>
<dbReference type="Bgee" id="ENSG00000243279">
    <property type="expression patterns" value="Expressed in adenohypophysis and 99 other cell types or tissues"/>
</dbReference>
<dbReference type="ExpressionAtlas" id="O60831">
    <property type="expression patterns" value="baseline and differential"/>
</dbReference>
<dbReference type="GO" id="GO:0010008">
    <property type="term" value="C:endosome membrane"/>
    <property type="evidence" value="ECO:0007669"/>
    <property type="project" value="UniProtKB-SubCell"/>
</dbReference>
<dbReference type="GO" id="GO:0098982">
    <property type="term" value="C:GABA-ergic synapse"/>
    <property type="evidence" value="ECO:0007669"/>
    <property type="project" value="Ensembl"/>
</dbReference>
<dbReference type="GO" id="GO:0098978">
    <property type="term" value="C:glutamatergic synapse"/>
    <property type="evidence" value="ECO:0007669"/>
    <property type="project" value="Ensembl"/>
</dbReference>
<dbReference type="GO" id="GO:0016020">
    <property type="term" value="C:membrane"/>
    <property type="evidence" value="ECO:0000318"/>
    <property type="project" value="GO_Central"/>
</dbReference>
<dbReference type="GO" id="GO:0098794">
    <property type="term" value="C:postsynapse"/>
    <property type="evidence" value="ECO:0007669"/>
    <property type="project" value="Ensembl"/>
</dbReference>
<dbReference type="GO" id="GO:0098793">
    <property type="term" value="C:presynapse"/>
    <property type="evidence" value="ECO:0007669"/>
    <property type="project" value="Ensembl"/>
</dbReference>
<dbReference type="GO" id="GO:0015813">
    <property type="term" value="P:L-glutamate transmembrane transport"/>
    <property type="evidence" value="ECO:0000250"/>
    <property type="project" value="UniProtKB"/>
</dbReference>
<dbReference type="GO" id="GO:0015031">
    <property type="term" value="P:protein transport"/>
    <property type="evidence" value="ECO:0007669"/>
    <property type="project" value="UniProtKB-KW"/>
</dbReference>
<dbReference type="InterPro" id="IPR004895">
    <property type="entry name" value="Prenylated_rab_accept_PRA1"/>
</dbReference>
<dbReference type="PANTHER" id="PTHR12859:SF1">
    <property type="entry name" value="PRA1 FAMILY PROTEIN 2"/>
    <property type="match status" value="1"/>
</dbReference>
<dbReference type="PANTHER" id="PTHR12859">
    <property type="entry name" value="PRA1 PROTEIN"/>
    <property type="match status" value="1"/>
</dbReference>
<dbReference type="Pfam" id="PF03208">
    <property type="entry name" value="PRA1"/>
    <property type="match status" value="1"/>
</dbReference>
<feature type="chain" id="PRO_0000220881" description="PRA1 family protein 2">
    <location>
        <begin position="1"/>
        <end position="178"/>
    </location>
</feature>
<feature type="topological domain" description="Cytoplasmic" evidence="1">
    <location>
        <begin position="1"/>
        <end position="41"/>
    </location>
</feature>
<feature type="transmembrane region" description="Helical" evidence="1">
    <location>
        <begin position="42"/>
        <end position="62"/>
    </location>
</feature>
<feature type="topological domain" description="Extracellular" evidence="1">
    <location>
        <begin position="63"/>
        <end position="64"/>
    </location>
</feature>
<feature type="transmembrane region" description="Helical" evidence="1">
    <location>
        <begin position="65"/>
        <end position="85"/>
    </location>
</feature>
<feature type="topological domain" description="Cytoplasmic" evidence="1">
    <location>
        <begin position="86"/>
        <end position="96"/>
    </location>
</feature>
<feature type="transmembrane region" description="Helical" evidence="1">
    <location>
        <begin position="97"/>
        <end position="119"/>
    </location>
</feature>
<feature type="topological domain" description="Extracellular" evidence="1">
    <location>
        <begin position="120"/>
        <end position="122"/>
    </location>
</feature>
<feature type="transmembrane region" description="Helical" evidence="1">
    <location>
        <begin position="123"/>
        <end position="140"/>
    </location>
</feature>
<feature type="topological domain" description="Cytoplasmic" evidence="1">
    <location>
        <begin position="141"/>
        <end position="178"/>
    </location>
</feature>
<feature type="sequence variant" id="VAR_050628" description="In dbSNP:rs34565429.">
    <original>L</original>
    <variation>F</variation>
    <location>
        <position position="56"/>
    </location>
</feature>
<proteinExistence type="evidence at protein level"/>
<keyword id="KW-0967">Endosome</keyword>
<keyword id="KW-0472">Membrane</keyword>
<keyword id="KW-0653">Protein transport</keyword>
<keyword id="KW-1267">Proteomics identification</keyword>
<keyword id="KW-1185">Reference proteome</keyword>
<keyword id="KW-0812">Transmembrane</keyword>
<keyword id="KW-1133">Transmembrane helix</keyword>
<keyword id="KW-0813">Transport</keyword>
<accession>O60831</accession>
<accession>B2RD20</accession>
<name>PRAF2_HUMAN</name>
<reference key="1">
    <citation type="submission" date="1998-04" db="EMBL/GenBank/DDBJ databases">
        <title>Transcription map in Xp11.23.</title>
        <authorList>
            <person name="Strom T.M."/>
            <person name="Nyakatura G."/>
            <person name="Hellebrand H."/>
            <person name="Drescher B."/>
            <person name="Rosenthal A."/>
            <person name="Meindl A."/>
        </authorList>
    </citation>
    <scope>NUCLEOTIDE SEQUENCE [LARGE SCALE MRNA]</scope>
</reference>
<reference key="2">
    <citation type="submission" date="2004-06" db="EMBL/GenBank/DDBJ databases">
        <title>Cloning of human full open reading frames in Gateway(TM) system entry vector (pDONR201).</title>
        <authorList>
            <person name="Ebert L."/>
            <person name="Schick M."/>
            <person name="Neubert P."/>
            <person name="Schatten R."/>
            <person name="Henze S."/>
            <person name="Korn B."/>
        </authorList>
    </citation>
    <scope>NUCLEOTIDE SEQUENCE [LARGE SCALE MRNA]</scope>
</reference>
<reference key="3">
    <citation type="journal article" date="2004" name="Nat. Genet.">
        <title>Complete sequencing and characterization of 21,243 full-length human cDNAs.</title>
        <authorList>
            <person name="Ota T."/>
            <person name="Suzuki Y."/>
            <person name="Nishikawa T."/>
            <person name="Otsuki T."/>
            <person name="Sugiyama T."/>
            <person name="Irie R."/>
            <person name="Wakamatsu A."/>
            <person name="Hayashi K."/>
            <person name="Sato H."/>
            <person name="Nagai K."/>
            <person name="Kimura K."/>
            <person name="Makita H."/>
            <person name="Sekine M."/>
            <person name="Obayashi M."/>
            <person name="Nishi T."/>
            <person name="Shibahara T."/>
            <person name="Tanaka T."/>
            <person name="Ishii S."/>
            <person name="Yamamoto J."/>
            <person name="Saito K."/>
            <person name="Kawai Y."/>
            <person name="Isono Y."/>
            <person name="Nakamura Y."/>
            <person name="Nagahari K."/>
            <person name="Murakami K."/>
            <person name="Yasuda T."/>
            <person name="Iwayanagi T."/>
            <person name="Wagatsuma M."/>
            <person name="Shiratori A."/>
            <person name="Sudo H."/>
            <person name="Hosoiri T."/>
            <person name="Kaku Y."/>
            <person name="Kodaira H."/>
            <person name="Kondo H."/>
            <person name="Sugawara M."/>
            <person name="Takahashi M."/>
            <person name="Kanda K."/>
            <person name="Yokoi T."/>
            <person name="Furuya T."/>
            <person name="Kikkawa E."/>
            <person name="Omura Y."/>
            <person name="Abe K."/>
            <person name="Kamihara K."/>
            <person name="Katsuta N."/>
            <person name="Sato K."/>
            <person name="Tanikawa M."/>
            <person name="Yamazaki M."/>
            <person name="Ninomiya K."/>
            <person name="Ishibashi T."/>
            <person name="Yamashita H."/>
            <person name="Murakawa K."/>
            <person name="Fujimori K."/>
            <person name="Tanai H."/>
            <person name="Kimata M."/>
            <person name="Watanabe M."/>
            <person name="Hiraoka S."/>
            <person name="Chiba Y."/>
            <person name="Ishida S."/>
            <person name="Ono Y."/>
            <person name="Takiguchi S."/>
            <person name="Watanabe S."/>
            <person name="Yosida M."/>
            <person name="Hotuta T."/>
            <person name="Kusano J."/>
            <person name="Kanehori K."/>
            <person name="Takahashi-Fujii A."/>
            <person name="Hara H."/>
            <person name="Tanase T.-O."/>
            <person name="Nomura Y."/>
            <person name="Togiya S."/>
            <person name="Komai F."/>
            <person name="Hara R."/>
            <person name="Takeuchi K."/>
            <person name="Arita M."/>
            <person name="Imose N."/>
            <person name="Musashino K."/>
            <person name="Yuuki H."/>
            <person name="Oshima A."/>
            <person name="Sasaki N."/>
            <person name="Aotsuka S."/>
            <person name="Yoshikawa Y."/>
            <person name="Matsunawa H."/>
            <person name="Ichihara T."/>
            <person name="Shiohata N."/>
            <person name="Sano S."/>
            <person name="Moriya S."/>
            <person name="Momiyama H."/>
            <person name="Satoh N."/>
            <person name="Takami S."/>
            <person name="Terashima Y."/>
            <person name="Suzuki O."/>
            <person name="Nakagawa S."/>
            <person name="Senoh A."/>
            <person name="Mizoguchi H."/>
            <person name="Goto Y."/>
            <person name="Shimizu F."/>
            <person name="Wakebe H."/>
            <person name="Hishigaki H."/>
            <person name="Watanabe T."/>
            <person name="Sugiyama A."/>
            <person name="Takemoto M."/>
            <person name="Kawakami B."/>
            <person name="Yamazaki M."/>
            <person name="Watanabe K."/>
            <person name="Kumagai A."/>
            <person name="Itakura S."/>
            <person name="Fukuzumi Y."/>
            <person name="Fujimori Y."/>
            <person name="Komiyama M."/>
            <person name="Tashiro H."/>
            <person name="Tanigami A."/>
            <person name="Fujiwara T."/>
            <person name="Ono T."/>
            <person name="Yamada K."/>
            <person name="Fujii Y."/>
            <person name="Ozaki K."/>
            <person name="Hirao M."/>
            <person name="Ohmori Y."/>
            <person name="Kawabata A."/>
            <person name="Hikiji T."/>
            <person name="Kobatake N."/>
            <person name="Inagaki H."/>
            <person name="Ikema Y."/>
            <person name="Okamoto S."/>
            <person name="Okitani R."/>
            <person name="Kawakami T."/>
            <person name="Noguchi S."/>
            <person name="Itoh T."/>
            <person name="Shigeta K."/>
            <person name="Senba T."/>
            <person name="Matsumura K."/>
            <person name="Nakajima Y."/>
            <person name="Mizuno T."/>
            <person name="Morinaga M."/>
            <person name="Sasaki M."/>
            <person name="Togashi T."/>
            <person name="Oyama M."/>
            <person name="Hata H."/>
            <person name="Watanabe M."/>
            <person name="Komatsu T."/>
            <person name="Mizushima-Sugano J."/>
            <person name="Satoh T."/>
            <person name="Shirai Y."/>
            <person name="Takahashi Y."/>
            <person name="Nakagawa K."/>
            <person name="Okumura K."/>
            <person name="Nagase T."/>
            <person name="Nomura N."/>
            <person name="Kikuchi H."/>
            <person name="Masuho Y."/>
            <person name="Yamashita R."/>
            <person name="Nakai K."/>
            <person name="Yada T."/>
            <person name="Nakamura Y."/>
            <person name="Ohara O."/>
            <person name="Isogai T."/>
            <person name="Sugano S."/>
        </authorList>
    </citation>
    <scope>NUCLEOTIDE SEQUENCE [LARGE SCALE MRNA]</scope>
    <source>
        <tissue>Amygdala</tissue>
    </source>
</reference>
<reference key="4">
    <citation type="submission" date="2005-07" db="EMBL/GenBank/DDBJ databases">
        <authorList>
            <person name="Mural R.J."/>
            <person name="Istrail S."/>
            <person name="Sutton G.G."/>
            <person name="Florea L."/>
            <person name="Halpern A.L."/>
            <person name="Mobarry C.M."/>
            <person name="Lippert R."/>
            <person name="Walenz B."/>
            <person name="Shatkay H."/>
            <person name="Dew I."/>
            <person name="Miller J.R."/>
            <person name="Flanigan M.J."/>
            <person name="Edwards N.J."/>
            <person name="Bolanos R."/>
            <person name="Fasulo D."/>
            <person name="Halldorsson B.V."/>
            <person name="Hannenhalli S."/>
            <person name="Turner R."/>
            <person name="Yooseph S."/>
            <person name="Lu F."/>
            <person name="Nusskern D.R."/>
            <person name="Shue B.C."/>
            <person name="Zheng X.H."/>
            <person name="Zhong F."/>
            <person name="Delcher A.L."/>
            <person name="Huson D.H."/>
            <person name="Kravitz S.A."/>
            <person name="Mouchard L."/>
            <person name="Reinert K."/>
            <person name="Remington K.A."/>
            <person name="Clark A.G."/>
            <person name="Waterman M.S."/>
            <person name="Eichler E.E."/>
            <person name="Adams M.D."/>
            <person name="Hunkapiller M.W."/>
            <person name="Myers E.W."/>
            <person name="Venter J.C."/>
        </authorList>
    </citation>
    <scope>NUCLEOTIDE SEQUENCE [LARGE SCALE GENOMIC DNA]</scope>
</reference>
<reference key="5">
    <citation type="journal article" date="2004" name="Genome Res.">
        <title>The status, quality, and expansion of the NIH full-length cDNA project: the Mammalian Gene Collection (MGC).</title>
        <authorList>
            <consortium name="The MGC Project Team"/>
        </authorList>
    </citation>
    <scope>NUCLEOTIDE SEQUENCE [LARGE SCALE MRNA]</scope>
    <source>
        <tissue>B-cell</tissue>
    </source>
</reference>
<reference key="6">
    <citation type="journal article" date="2005" name="FEBS Lett.">
        <title>JM4 is a four-transmembrane protein binding to the CCR5 receptor.</title>
        <authorList>
            <person name="Schweneker M."/>
            <person name="Bachmann A.S."/>
            <person name="Moelling K."/>
        </authorList>
    </citation>
    <scope>INTERACTION WITH CCR5</scope>
</reference>
<reference key="7">
    <citation type="journal article" date="2006" name="Gene">
        <title>Genomic organization, expression profile, and characterization of the new protein PRA1 domain family, member 2 (PRAF2).</title>
        <authorList>
            <person name="Fo C.S."/>
            <person name="Coleman C.S."/>
            <person name="Wallick C.J."/>
            <person name="Vine A.L."/>
            <person name="Bachmann A.S."/>
        </authorList>
    </citation>
    <scope>GENOMIC ORGANIZATION</scope>
    <scope>TISSUE SPECIFICITY</scope>
</reference>
<reference key="8">
    <citation type="journal article" date="2006" name="Gene">
        <title>Genomic organization, characterization, and molecular 3D model of GDE1, a novel mammalian glycerophosphoinositol phosphodiesterase.</title>
        <authorList>
            <person name="Bachmann A.S."/>
            <person name="Duennebier F.F."/>
            <person name="Mocz G."/>
        </authorList>
    </citation>
    <scope>INTERACTION WITH GDE1</scope>
</reference>
<reference key="9">
    <citation type="journal article" date="2007" name="Clin. Cancer Res.">
        <title>Expression of prenylated Rab acceptor 1 domain family, member 2 (PRAF2) in neuroblastoma: correlation with clinical features, cellular localization, and cerulenin-mediated apoptosis regulation.</title>
        <authorList>
            <person name="Geerts D."/>
            <person name="Wallick C.J."/>
            <person name="Koomoa D.-L."/>
            <person name="Koster J."/>
            <person name="Versteeg R."/>
            <person name="Go R.C.V."/>
            <person name="Bachmann A.S."/>
        </authorList>
    </citation>
    <scope>FUNCTION</scope>
    <scope>SUBCELLULAR LOCATION</scope>
    <scope>TISSUE SPECIFICITY</scope>
</reference>
<reference key="10">
    <citation type="journal article" date="2008" name="Neurosci. Lett.">
        <title>Expression profile of PRAF2 in the human brain and enrichment in synaptic vesicles.</title>
        <authorList>
            <person name="Koomoa D.-L."/>
            <person name="Go R.C.V."/>
            <person name="Wester K."/>
            <person name="Bachmann A.S."/>
        </authorList>
    </citation>
    <scope>FUNCTION</scope>
    <scope>TISSUE SPECIFICITY</scope>
</reference>
<reference key="11">
    <citation type="journal article" date="2011" name="BMC Syst. Biol.">
        <title>Initial characterization of the human central proteome.</title>
        <authorList>
            <person name="Burkard T.R."/>
            <person name="Planyavsky M."/>
            <person name="Kaupe I."/>
            <person name="Breitwieser F.P."/>
            <person name="Buerckstuemmer T."/>
            <person name="Bennett K.L."/>
            <person name="Superti-Furga G."/>
            <person name="Colinge J."/>
        </authorList>
    </citation>
    <scope>IDENTIFICATION BY MASS SPECTROMETRY [LARGE SCALE ANALYSIS]</scope>
</reference>
<evidence type="ECO:0000255" key="1"/>
<evidence type="ECO:0000269" key="2">
    <source>
    </source>
</evidence>
<evidence type="ECO:0000269" key="3">
    <source>
    </source>
</evidence>
<evidence type="ECO:0000269" key="4">
    <source>
    </source>
</evidence>
<evidence type="ECO:0000269" key="5">
    <source>
    </source>
</evidence>
<evidence type="ECO:0000269" key="6">
    <source>
    </source>
</evidence>
<evidence type="ECO:0000305" key="7"/>
<evidence type="ECO:0000305" key="8">
    <source>
    </source>
</evidence>
<comment type="function">
    <text evidence="5 6">May be involved in ER/Golgi transport and vesicular traffic. Plays a proapoptotic role in cerulenin-induced neuroblastoma apoptosis.</text>
</comment>
<comment type="subunit">
    <text evidence="2 3">Interacts with CCR5 and GDE1.</text>
</comment>
<comment type="interaction">
    <interactant intactId="EBI-2506064">
        <id>O60831</id>
    </interactant>
    <interactant intactId="EBI-348517">
        <id>O95870</id>
        <label>ABHD16A</label>
    </interactant>
    <organismsDiffer>false</organismsDiffer>
    <experiments>3</experiments>
</comment>
<comment type="interaction">
    <interactant intactId="EBI-2506064">
        <id>O60831</id>
    </interactant>
    <interactant intactId="EBI-18053335">
        <id>Q6QNK2</id>
        <label>ADGRD1</label>
    </interactant>
    <organismsDiffer>false</organismsDiffer>
    <experiments>3</experiments>
</comment>
<comment type="interaction">
    <interactant intactId="EBI-2506064">
        <id>O60831</id>
    </interactant>
    <interactant intactId="EBI-3925742">
        <id>Q8TD06</id>
        <label>AGR3</label>
    </interactant>
    <organismsDiffer>false</organismsDiffer>
    <experiments>3</experiments>
</comment>
<comment type="interaction">
    <interactant intactId="EBI-2506064">
        <id>O60831</id>
    </interactant>
    <interactant intactId="EBI-13059134">
        <id>Q13520</id>
        <label>AQP6</label>
    </interactant>
    <organismsDiffer>false</organismsDiffer>
    <experiments>3</experiments>
</comment>
<comment type="interaction">
    <interactant intactId="EBI-2506064">
        <id>O60831</id>
    </interactant>
    <interactant intactId="EBI-7797864">
        <id>P11912</id>
        <label>CD79A</label>
    </interactant>
    <organismsDiffer>false</organismsDiffer>
    <experiments>3</experiments>
</comment>
<comment type="interaction">
    <interactant intactId="EBI-2506064">
        <id>O60831</id>
    </interactant>
    <interactant intactId="EBI-349854">
        <id>P13569</id>
        <label>CFTR</label>
    </interactant>
    <organismsDiffer>false</organismsDiffer>
    <experiments>4</experiments>
</comment>
<comment type="interaction">
    <interactant intactId="EBI-2506064">
        <id>O60831</id>
    </interactant>
    <interactant intactId="EBI-752069">
        <id>Q9H5X1</id>
        <label>CIAO2A</label>
    </interactant>
    <organismsDiffer>false</organismsDiffer>
    <experiments>3</experiments>
</comment>
<comment type="interaction">
    <interactant intactId="EBI-2506064">
        <id>O60831</id>
    </interactant>
    <interactant intactId="EBI-2873246">
        <id>Q8IUN9</id>
        <label>CLEC10A</label>
    </interactant>
    <organismsDiffer>false</organismsDiffer>
    <experiments>3</experiments>
</comment>
<comment type="interaction">
    <interactant intactId="EBI-2506064">
        <id>O60831</id>
    </interactant>
    <interactant intactId="EBI-8787095">
        <id>O00559</id>
        <label>EBAG9</label>
    </interactant>
    <organismsDiffer>false</organismsDiffer>
    <experiments>3</experiments>
</comment>
<comment type="interaction">
    <interactant intactId="EBI-2506064">
        <id>O60831</id>
    </interactant>
    <interactant intactId="EBI-750433">
        <id>P36382</id>
        <label>GJA5</label>
    </interactant>
    <organismsDiffer>false</organismsDiffer>
    <experiments>3</experiments>
</comment>
<comment type="interaction">
    <interactant intactId="EBI-2506064">
        <id>O60831</id>
    </interactant>
    <interactant intactId="EBI-17458373">
        <id>P48165</id>
        <label>GJA8</label>
    </interactant>
    <organismsDiffer>false</organismsDiffer>
    <experiments>3</experiments>
</comment>
<comment type="interaction">
    <interactant intactId="EBI-2506064">
        <id>O60831</id>
    </interactant>
    <interactant intactId="EBI-13345167">
        <id>Q8TDT2</id>
        <label>GPR152</label>
    </interactant>
    <organismsDiffer>false</organismsDiffer>
    <experiments>3</experiments>
</comment>
<comment type="interaction">
    <interactant intactId="EBI-2506064">
        <id>O60831</id>
    </interactant>
    <interactant intactId="EBI-11427100">
        <id>P31937</id>
        <label>HIBADH</label>
    </interactant>
    <organismsDiffer>false</organismsDiffer>
    <experiments>3</experiments>
</comment>
<comment type="interaction">
    <interactant intactId="EBI-2506064">
        <id>O60831</id>
    </interactant>
    <interactant intactId="EBI-1052304">
        <id>Q8NBQ5</id>
        <label>HSD17B11</label>
    </interactant>
    <organismsDiffer>false</organismsDiffer>
    <experiments>3</experiments>
</comment>
<comment type="interaction">
    <interactant intactId="EBI-2506064">
        <id>O60831</id>
    </interactant>
    <interactant intactId="EBI-2816356">
        <id>Q8IX19</id>
        <label>MCEMP1</label>
    </interactant>
    <organismsDiffer>false</organismsDiffer>
    <experiments>3</experiments>
</comment>
<comment type="interaction">
    <interactant intactId="EBI-2506064">
        <id>O60831</id>
    </interactant>
    <interactant intactId="EBI-740987">
        <id>Q9NQG6</id>
        <label>MIEF1</label>
    </interactant>
    <organismsDiffer>false</organismsDiffer>
    <experiments>3</experiments>
</comment>
<comment type="interaction">
    <interactant intactId="EBI-2506064">
        <id>O60831</id>
    </interactant>
    <interactant intactId="EBI-11978907">
        <id>Q9ULP0-2</id>
        <label>NDRG4</label>
    </interactant>
    <organismsDiffer>false</organismsDiffer>
    <experiments>3</experiments>
</comment>
<comment type="interaction">
    <interactant intactId="EBI-2506064">
        <id>O60831</id>
    </interactant>
    <interactant intactId="EBI-7545592">
        <id>Q9H6H4</id>
        <label>REEP4</label>
    </interactant>
    <organismsDiffer>false</organismsDiffer>
    <experiments>3</experiments>
</comment>
<comment type="interaction">
    <interactant intactId="EBI-2506064">
        <id>O60831</id>
    </interactant>
    <interactant intactId="EBI-10192441">
        <id>Q86VR2</id>
        <label>RETREG3</label>
    </interactant>
    <organismsDiffer>false</organismsDiffer>
    <experiments>3</experiments>
</comment>
<comment type="interaction">
    <interactant intactId="EBI-2506064">
        <id>O60831</id>
    </interactant>
    <interactant intactId="EBI-348482">
        <id>Q99942</id>
        <label>RNF5</label>
    </interactant>
    <organismsDiffer>false</organismsDiffer>
    <experiments>3</experiments>
</comment>
<comment type="interaction">
    <interactant intactId="EBI-2506064">
        <id>O60831</id>
    </interactant>
    <interactant intactId="EBI-18159983">
        <id>Q3KNW5</id>
        <label>SLC10A6</label>
    </interactant>
    <organismsDiffer>false</organismsDiffer>
    <experiments>3</experiments>
</comment>
<comment type="interaction">
    <interactant intactId="EBI-2506064">
        <id>O60831</id>
    </interactant>
    <interactant intactId="EBI-12947623">
        <id>Q96MV1</id>
        <label>TLCD4</label>
    </interactant>
    <organismsDiffer>false</organismsDiffer>
    <experiments>3</experiments>
</comment>
<comment type="interaction">
    <interactant intactId="EBI-2506064">
        <id>O60831</id>
    </interactant>
    <interactant intactId="EBI-8638294">
        <id>Q9NUH8</id>
        <label>TMEM14B</label>
    </interactant>
    <organismsDiffer>false</organismsDiffer>
    <experiments>3</experiments>
</comment>
<comment type="interaction">
    <interactant intactId="EBI-2506064">
        <id>O60831</id>
    </interactant>
    <interactant intactId="EBI-6447886">
        <id>Q9Y320</id>
        <label>TMX2</label>
    </interactant>
    <organismsDiffer>false</organismsDiffer>
    <experiments>3</experiments>
</comment>
<comment type="interaction">
    <interactant intactId="EBI-2506064">
        <id>O60831</id>
    </interactant>
    <interactant intactId="EBI-12837904">
        <id>Q96MV8</id>
        <label>ZDHHC15</label>
    </interactant>
    <organismsDiffer>false</organismsDiffer>
    <experiments>3</experiments>
</comment>
<comment type="subcellular location">
    <subcellularLocation>
        <location evidence="8">Endosome membrane</location>
        <topology evidence="8">Multi-pass membrane protein</topology>
    </subcellularLocation>
</comment>
<comment type="tissue specificity">
    <text evidence="4 5 6">Strong expression in the brain, small intestine, lung, spleen, and pancreas as well as in tumor tissues of the breast, colon, lung and ovary, with a weaker expression in normal tissues of the same patient. High expression in neuroblastic tumors. Strongly expressed in Purkinje cells and more moderately in cells of the molecular and the granular layers in the cerebellum. Detected in neuronal cells, but not in non-neuronal cells in the cerebral cortex, hippocampus, and lateral ventricles.</text>
</comment>
<comment type="similarity">
    <text evidence="7">Belongs to the PRA1 family.</text>
</comment>
<sequence>MSEVRLPPLRALDDFVLGSARLAAPDPCDPQRWCHRVINNLLYYQTNYLLCFGIGLALAGYVRPLHTLLSALVVAVALGVLVWAAETRAAVRRCRRSHPAACLAAVLAVGLLVLWVAGGACTFLFSIAGPVLLILVHASLRLRNLKNKIENKIESIGLKRTPMGLLLEALGQEQEAGS</sequence>
<organism>
    <name type="scientific">Homo sapiens</name>
    <name type="common">Human</name>
    <dbReference type="NCBI Taxonomy" id="9606"/>
    <lineage>
        <taxon>Eukaryota</taxon>
        <taxon>Metazoa</taxon>
        <taxon>Chordata</taxon>
        <taxon>Craniata</taxon>
        <taxon>Vertebrata</taxon>
        <taxon>Euteleostomi</taxon>
        <taxon>Mammalia</taxon>
        <taxon>Eutheria</taxon>
        <taxon>Euarchontoglires</taxon>
        <taxon>Primates</taxon>
        <taxon>Haplorrhini</taxon>
        <taxon>Catarrhini</taxon>
        <taxon>Hominidae</taxon>
        <taxon>Homo</taxon>
    </lineage>
</organism>